<feature type="chain" id="PRO_1000014767" description="Large ribosomal subunit protein bL9">
    <location>
        <begin position="1"/>
        <end position="147"/>
    </location>
</feature>
<accession>A7FZG5</accession>
<sequence>MKVILLKDVKSLGKKGDLVNASDGYARNYLIPKKLAEQATENNVHILNNKKEAERRQKLKELEEAQKLAKSLMGKEIKFKVKIGENGRLFGSITSKDISEKLKEQYNMNIDKKKIVAETIRQTGVYEAEIKIYPEVSTKVKVSVLEE</sequence>
<dbReference type="EMBL" id="CP000726">
    <property type="protein sequence ID" value="ABS34881.1"/>
    <property type="molecule type" value="Genomic_DNA"/>
</dbReference>
<dbReference type="RefSeq" id="WP_012048442.1">
    <property type="nucleotide sequence ID" value="NC_009697.1"/>
</dbReference>
<dbReference type="SMR" id="A7FZG5"/>
<dbReference type="GeneID" id="5187076"/>
<dbReference type="KEGG" id="cba:CLB_3715"/>
<dbReference type="HOGENOM" id="CLU_078938_3_0_9"/>
<dbReference type="GO" id="GO:1990904">
    <property type="term" value="C:ribonucleoprotein complex"/>
    <property type="evidence" value="ECO:0007669"/>
    <property type="project" value="UniProtKB-KW"/>
</dbReference>
<dbReference type="GO" id="GO:0005840">
    <property type="term" value="C:ribosome"/>
    <property type="evidence" value="ECO:0007669"/>
    <property type="project" value="UniProtKB-KW"/>
</dbReference>
<dbReference type="GO" id="GO:0019843">
    <property type="term" value="F:rRNA binding"/>
    <property type="evidence" value="ECO:0007669"/>
    <property type="project" value="UniProtKB-UniRule"/>
</dbReference>
<dbReference type="GO" id="GO:0003735">
    <property type="term" value="F:structural constituent of ribosome"/>
    <property type="evidence" value="ECO:0007669"/>
    <property type="project" value="InterPro"/>
</dbReference>
<dbReference type="GO" id="GO:0006412">
    <property type="term" value="P:translation"/>
    <property type="evidence" value="ECO:0007669"/>
    <property type="project" value="UniProtKB-UniRule"/>
</dbReference>
<dbReference type="FunFam" id="3.40.5.10:FF:000002">
    <property type="entry name" value="50S ribosomal protein L9"/>
    <property type="match status" value="1"/>
</dbReference>
<dbReference type="Gene3D" id="3.10.430.100">
    <property type="entry name" value="Ribosomal protein L9, C-terminal domain"/>
    <property type="match status" value="1"/>
</dbReference>
<dbReference type="Gene3D" id="3.40.5.10">
    <property type="entry name" value="Ribosomal protein L9, N-terminal domain"/>
    <property type="match status" value="1"/>
</dbReference>
<dbReference type="HAMAP" id="MF_00503">
    <property type="entry name" value="Ribosomal_bL9"/>
    <property type="match status" value="1"/>
</dbReference>
<dbReference type="InterPro" id="IPR000244">
    <property type="entry name" value="Ribosomal_bL9"/>
</dbReference>
<dbReference type="InterPro" id="IPR009027">
    <property type="entry name" value="Ribosomal_bL9/RNase_H1_N"/>
</dbReference>
<dbReference type="InterPro" id="IPR020594">
    <property type="entry name" value="Ribosomal_bL9_bac/chp"/>
</dbReference>
<dbReference type="InterPro" id="IPR020069">
    <property type="entry name" value="Ribosomal_bL9_C"/>
</dbReference>
<dbReference type="InterPro" id="IPR036791">
    <property type="entry name" value="Ribosomal_bL9_C_sf"/>
</dbReference>
<dbReference type="InterPro" id="IPR020070">
    <property type="entry name" value="Ribosomal_bL9_N"/>
</dbReference>
<dbReference type="InterPro" id="IPR036935">
    <property type="entry name" value="Ribosomal_bL9_N_sf"/>
</dbReference>
<dbReference type="NCBIfam" id="TIGR00158">
    <property type="entry name" value="L9"/>
    <property type="match status" value="1"/>
</dbReference>
<dbReference type="PANTHER" id="PTHR21368">
    <property type="entry name" value="50S RIBOSOMAL PROTEIN L9"/>
    <property type="match status" value="1"/>
</dbReference>
<dbReference type="Pfam" id="PF03948">
    <property type="entry name" value="Ribosomal_L9_C"/>
    <property type="match status" value="1"/>
</dbReference>
<dbReference type="Pfam" id="PF01281">
    <property type="entry name" value="Ribosomal_L9_N"/>
    <property type="match status" value="1"/>
</dbReference>
<dbReference type="SUPFAM" id="SSF55658">
    <property type="entry name" value="L9 N-domain-like"/>
    <property type="match status" value="1"/>
</dbReference>
<dbReference type="SUPFAM" id="SSF55653">
    <property type="entry name" value="Ribosomal protein L9 C-domain"/>
    <property type="match status" value="1"/>
</dbReference>
<dbReference type="PROSITE" id="PS00651">
    <property type="entry name" value="RIBOSOMAL_L9"/>
    <property type="match status" value="1"/>
</dbReference>
<gene>
    <name evidence="1" type="primary">rplI</name>
    <name type="ordered locus">CLB_3715</name>
</gene>
<evidence type="ECO:0000255" key="1">
    <source>
        <dbReference type="HAMAP-Rule" id="MF_00503"/>
    </source>
</evidence>
<evidence type="ECO:0000305" key="2"/>
<name>RL9_CLOB1</name>
<reference key="1">
    <citation type="journal article" date="2007" name="PLoS ONE">
        <title>Analysis of the neurotoxin complex genes in Clostridium botulinum A1-A4 and B1 strains: BoNT/A3, /Ba4 and /B1 clusters are located within plasmids.</title>
        <authorList>
            <person name="Smith T.J."/>
            <person name="Hill K.K."/>
            <person name="Foley B.T."/>
            <person name="Detter J.C."/>
            <person name="Munk A.C."/>
            <person name="Bruce D.C."/>
            <person name="Doggett N.A."/>
            <person name="Smith L.A."/>
            <person name="Marks J.D."/>
            <person name="Xie G."/>
            <person name="Brettin T.S."/>
        </authorList>
    </citation>
    <scope>NUCLEOTIDE SEQUENCE [LARGE SCALE GENOMIC DNA]</scope>
    <source>
        <strain>ATCC 19397 / Type A</strain>
    </source>
</reference>
<protein>
    <recommendedName>
        <fullName evidence="1">Large ribosomal subunit protein bL9</fullName>
    </recommendedName>
    <alternativeName>
        <fullName evidence="2">50S ribosomal protein L9</fullName>
    </alternativeName>
</protein>
<organism>
    <name type="scientific">Clostridium botulinum (strain ATCC 19397 / Type A)</name>
    <dbReference type="NCBI Taxonomy" id="441770"/>
    <lineage>
        <taxon>Bacteria</taxon>
        <taxon>Bacillati</taxon>
        <taxon>Bacillota</taxon>
        <taxon>Clostridia</taxon>
        <taxon>Eubacteriales</taxon>
        <taxon>Clostridiaceae</taxon>
        <taxon>Clostridium</taxon>
    </lineage>
</organism>
<proteinExistence type="inferred from homology"/>
<comment type="function">
    <text evidence="1">Binds to the 23S rRNA.</text>
</comment>
<comment type="similarity">
    <text evidence="1">Belongs to the bacterial ribosomal protein bL9 family.</text>
</comment>
<keyword id="KW-0687">Ribonucleoprotein</keyword>
<keyword id="KW-0689">Ribosomal protein</keyword>
<keyword id="KW-0694">RNA-binding</keyword>
<keyword id="KW-0699">rRNA-binding</keyword>